<name>ZBI1_ZYGBI</name>
<keyword id="KW-0255">Endonuclease</keyword>
<keyword id="KW-0378">Hydrolase</keyword>
<keyword id="KW-0404">Intron homing</keyword>
<keyword id="KW-0496">Mitochondrion</keyword>
<keyword id="KW-0540">Nuclease</keyword>
<reference key="1">
    <citation type="submission" date="1998-05" db="EMBL/GenBank/DDBJ databases">
        <title>Phylogenetic analysis of the group I intron and homing endonuclease w from the Saccharomycetoideae indicates an evolutionary history that includes horizontal transfer.</title>
        <authorList>
            <person name="Goddard M.R."/>
            <person name="Burt A."/>
        </authorList>
    </citation>
    <scope>NUCLEOTIDE SEQUENCE [GENOMIC DNA]</scope>
    <source>
        <strain>ATCC 52405 / DSM 70415 / BCRC 21505 / CBS 702 / CECT 11055 / NBRC 1131 / NCYC 1495 / UCD 66-24</strain>
    </source>
</reference>
<comment type="function">
    <text>Endonuclease involved in mitochondrial 21S rRNA gene intron homing.</text>
</comment>
<comment type="subcellular location">
    <subcellularLocation>
        <location>Mitochondrion</location>
    </subcellularLocation>
</comment>
<comment type="similarity">
    <text evidence="1">Belongs to the LAGLIDADG endonuclease family.</text>
</comment>
<dbReference type="EC" id="3.1.-.-"/>
<dbReference type="EMBL" id="AJ229056">
    <property type="protein sequence ID" value="CAA13071.1"/>
    <property type="molecule type" value="Genomic_DNA"/>
</dbReference>
<dbReference type="SMR" id="O63264"/>
<dbReference type="REBASE" id="3266">
    <property type="entry name" value="I-ZbiIP"/>
</dbReference>
<dbReference type="GO" id="GO:0005739">
    <property type="term" value="C:mitochondrion"/>
    <property type="evidence" value="ECO:0007669"/>
    <property type="project" value="UniProtKB-SubCell"/>
</dbReference>
<dbReference type="GO" id="GO:0004519">
    <property type="term" value="F:endonuclease activity"/>
    <property type="evidence" value="ECO:0007669"/>
    <property type="project" value="UniProtKB-KW"/>
</dbReference>
<dbReference type="GO" id="GO:0000373">
    <property type="term" value="P:Group II intron splicing"/>
    <property type="evidence" value="ECO:0007669"/>
    <property type="project" value="TreeGrafter"/>
</dbReference>
<dbReference type="GO" id="GO:0006314">
    <property type="term" value="P:intron homing"/>
    <property type="evidence" value="ECO:0007669"/>
    <property type="project" value="UniProtKB-KW"/>
</dbReference>
<dbReference type="GO" id="GO:0045292">
    <property type="term" value="P:mRNA cis splicing, via spliceosome"/>
    <property type="evidence" value="ECO:0007669"/>
    <property type="project" value="TreeGrafter"/>
</dbReference>
<dbReference type="Gene3D" id="3.10.28.10">
    <property type="entry name" value="Homing endonucleases"/>
    <property type="match status" value="2"/>
</dbReference>
<dbReference type="InterPro" id="IPR052500">
    <property type="entry name" value="Chloro/Mito_RNA_Process"/>
</dbReference>
<dbReference type="InterPro" id="IPR027434">
    <property type="entry name" value="Homing_endonucl"/>
</dbReference>
<dbReference type="InterPro" id="IPR004860">
    <property type="entry name" value="LAGLIDADG_dom"/>
</dbReference>
<dbReference type="PANTHER" id="PTHR47539">
    <property type="entry name" value="PENTATRICOPEPTIDE REPEAT-CONTAINING PROTEIN OTP51, CHLOROPLASTIC"/>
    <property type="match status" value="1"/>
</dbReference>
<dbReference type="PANTHER" id="PTHR47539:SF1">
    <property type="entry name" value="PENTATRICOPEPTIDE REPEAT-CONTAINING PROTEIN OTP51, CHLOROPLASTIC"/>
    <property type="match status" value="1"/>
</dbReference>
<dbReference type="Pfam" id="PF03161">
    <property type="entry name" value="LAGLIDADG_2"/>
    <property type="match status" value="1"/>
</dbReference>
<dbReference type="SUPFAM" id="SSF55608">
    <property type="entry name" value="Homing endonucleases"/>
    <property type="match status" value="1"/>
</dbReference>
<evidence type="ECO:0000305" key="1"/>
<geneLocation type="mitochondrion"/>
<proteinExistence type="inferred from homology"/>
<organism>
    <name type="scientific">Zygosaccharomyces bisporus</name>
    <dbReference type="NCBI Taxonomy" id="4957"/>
    <lineage>
        <taxon>Eukaryota</taxon>
        <taxon>Fungi</taxon>
        <taxon>Dikarya</taxon>
        <taxon>Ascomycota</taxon>
        <taxon>Saccharomycotina</taxon>
        <taxon>Saccharomycetes</taxon>
        <taxon>Saccharomycetales</taxon>
        <taxon>Saccharomycetaceae</taxon>
        <taxon>Zygosaccharomyces</taxon>
    </lineage>
</organism>
<sequence length="239" mass="28065">MMKFIKKEQIKNLGPNSKLLKQYKSQLTNLTSEQLEIGVGLLLGDAYIRSRDNGKTNCIQFEWKNKAYIDHICLKFDEWVLSPPHKKMRINHLGNEVITWGAQTFKHEAFNELSKLFIINNKKHIINNLIEDYVTPKSLAYWFMDDGGKWDYNKGSMNKSIVLNTQCFTIDEVNSLINGLNTKFKLNCSMKFNKNKPIIYIPHNSYNIYYELISPYIITEMRYKLPSYEGTSKDYNKIH</sequence>
<protein>
    <recommendedName>
        <fullName>Probable intron-encoded endonuclease I-ZbiI</fullName>
        <ecNumber>3.1.-.-</ecNumber>
    </recommendedName>
</protein>
<accession>O63264</accession>
<feature type="chain" id="PRO_0000192787" description="Probable intron-encoded endonuclease I-ZbiI">
    <location>
        <begin position="1"/>
        <end position="239"/>
    </location>
</feature>